<reference key="1">
    <citation type="journal article" date="2002" name="Nature">
        <title>The genome sequence of Schizosaccharomyces pombe.</title>
        <authorList>
            <person name="Wood V."/>
            <person name="Gwilliam R."/>
            <person name="Rajandream M.A."/>
            <person name="Lyne M.H."/>
            <person name="Lyne R."/>
            <person name="Stewart A."/>
            <person name="Sgouros J.G."/>
            <person name="Peat N."/>
            <person name="Hayles J."/>
            <person name="Baker S.G."/>
            <person name="Basham D."/>
            <person name="Bowman S."/>
            <person name="Brooks K."/>
            <person name="Brown D."/>
            <person name="Brown S."/>
            <person name="Chillingworth T."/>
            <person name="Churcher C.M."/>
            <person name="Collins M."/>
            <person name="Connor R."/>
            <person name="Cronin A."/>
            <person name="Davis P."/>
            <person name="Feltwell T."/>
            <person name="Fraser A."/>
            <person name="Gentles S."/>
            <person name="Goble A."/>
            <person name="Hamlin N."/>
            <person name="Harris D.E."/>
            <person name="Hidalgo J."/>
            <person name="Hodgson G."/>
            <person name="Holroyd S."/>
            <person name="Hornsby T."/>
            <person name="Howarth S."/>
            <person name="Huckle E.J."/>
            <person name="Hunt S."/>
            <person name="Jagels K."/>
            <person name="James K.D."/>
            <person name="Jones L."/>
            <person name="Jones M."/>
            <person name="Leather S."/>
            <person name="McDonald S."/>
            <person name="McLean J."/>
            <person name="Mooney P."/>
            <person name="Moule S."/>
            <person name="Mungall K.L."/>
            <person name="Murphy L.D."/>
            <person name="Niblett D."/>
            <person name="Odell C."/>
            <person name="Oliver K."/>
            <person name="O'Neil S."/>
            <person name="Pearson D."/>
            <person name="Quail M.A."/>
            <person name="Rabbinowitsch E."/>
            <person name="Rutherford K.M."/>
            <person name="Rutter S."/>
            <person name="Saunders D."/>
            <person name="Seeger K."/>
            <person name="Sharp S."/>
            <person name="Skelton J."/>
            <person name="Simmonds M.N."/>
            <person name="Squares R."/>
            <person name="Squares S."/>
            <person name="Stevens K."/>
            <person name="Taylor K."/>
            <person name="Taylor R.G."/>
            <person name="Tivey A."/>
            <person name="Walsh S.V."/>
            <person name="Warren T."/>
            <person name="Whitehead S."/>
            <person name="Woodward J.R."/>
            <person name="Volckaert G."/>
            <person name="Aert R."/>
            <person name="Robben J."/>
            <person name="Grymonprez B."/>
            <person name="Weltjens I."/>
            <person name="Vanstreels E."/>
            <person name="Rieger M."/>
            <person name="Schaefer M."/>
            <person name="Mueller-Auer S."/>
            <person name="Gabel C."/>
            <person name="Fuchs M."/>
            <person name="Duesterhoeft A."/>
            <person name="Fritzc C."/>
            <person name="Holzer E."/>
            <person name="Moestl D."/>
            <person name="Hilbert H."/>
            <person name="Borzym K."/>
            <person name="Langer I."/>
            <person name="Beck A."/>
            <person name="Lehrach H."/>
            <person name="Reinhardt R."/>
            <person name="Pohl T.M."/>
            <person name="Eger P."/>
            <person name="Zimmermann W."/>
            <person name="Wedler H."/>
            <person name="Wambutt R."/>
            <person name="Purnelle B."/>
            <person name="Goffeau A."/>
            <person name="Cadieu E."/>
            <person name="Dreano S."/>
            <person name="Gloux S."/>
            <person name="Lelaure V."/>
            <person name="Mottier S."/>
            <person name="Galibert F."/>
            <person name="Aves S.J."/>
            <person name="Xiang Z."/>
            <person name="Hunt C."/>
            <person name="Moore K."/>
            <person name="Hurst S.M."/>
            <person name="Lucas M."/>
            <person name="Rochet M."/>
            <person name="Gaillardin C."/>
            <person name="Tallada V.A."/>
            <person name="Garzon A."/>
            <person name="Thode G."/>
            <person name="Daga R.R."/>
            <person name="Cruzado L."/>
            <person name="Jimenez J."/>
            <person name="Sanchez M."/>
            <person name="del Rey F."/>
            <person name="Benito J."/>
            <person name="Dominguez A."/>
            <person name="Revuelta J.L."/>
            <person name="Moreno S."/>
            <person name="Armstrong J."/>
            <person name="Forsburg S.L."/>
            <person name="Cerutti L."/>
            <person name="Lowe T."/>
            <person name="McCombie W.R."/>
            <person name="Paulsen I."/>
            <person name="Potashkin J."/>
            <person name="Shpakovski G.V."/>
            <person name="Ussery D."/>
            <person name="Barrell B.G."/>
            <person name="Nurse P."/>
        </authorList>
    </citation>
    <scope>NUCLEOTIDE SEQUENCE [LARGE SCALE GENOMIC DNA]</scope>
    <source>
        <strain>972 / ATCC 24843</strain>
    </source>
</reference>
<reference key="2">
    <citation type="journal article" date="2006" name="Nat. Biotechnol.">
        <title>ORFeome cloning and global analysis of protein localization in the fission yeast Schizosaccharomyces pombe.</title>
        <authorList>
            <person name="Matsuyama A."/>
            <person name="Arai R."/>
            <person name="Yashiroda Y."/>
            <person name="Shirai A."/>
            <person name="Kamata A."/>
            <person name="Sekido S."/>
            <person name="Kobayashi Y."/>
            <person name="Hashimoto A."/>
            <person name="Hamamoto M."/>
            <person name="Hiraoka Y."/>
            <person name="Horinouchi S."/>
            <person name="Yoshida M."/>
        </authorList>
    </citation>
    <scope>SUBCELLULAR LOCATION [LARGE SCALE ANALYSIS]</scope>
</reference>
<accession>Q9UUC1</accession>
<comment type="function">
    <text evidence="1">Component of the ribosome, a large ribonucleoprotein complex responsible for the synthesis of proteins in the cell. The small ribosomal subunit (SSU) binds messenger RNAs (mRNAs) and translates the encoded message by selecting cognate aminoacyl-transfer RNA (tRNA) molecules. The large subunit (LSU) contains the ribosomal catalytic site termed the peptidyl transferase center (PTC), which catalyzes the formation of peptide bonds, thereby polymerizing the amino acids delivered by tRNAs into a polypeptide chain. The nascent polypeptides leave the ribosome through a tunnel in the LSU and interact with protein factors that function in enzymatic processing, targeting, and the membrane insertion of nascent chains at the exit of the ribosomal tunnel.</text>
</comment>
<comment type="subunit">
    <text evidence="1">Component of the large ribosomal subunit (LSU). Mature yeast ribosomes consist of a small (40S) and a large (60S) subunit. The 40S small subunit contains 1 molecule of ribosomal RNA (18S rRNA) and at least 33 different proteins. The large 60S subunit contains 3 rRNA molecules (25S, 5.8S and 5S rRNA) and at least 46 different proteins.</text>
</comment>
<comment type="subcellular location">
    <subcellularLocation>
        <location evidence="3">Cytoplasm</location>
    </subcellularLocation>
</comment>
<comment type="miscellaneous">
    <text>There are 2 genes for eL21 in S.pombe.</text>
</comment>
<comment type="similarity">
    <text evidence="4">Belongs to the eukaryotic ribosomal protein eL21 family.</text>
</comment>
<keyword id="KW-0002">3D-structure</keyword>
<keyword id="KW-0963">Cytoplasm</keyword>
<keyword id="KW-1185">Reference proteome</keyword>
<keyword id="KW-0687">Ribonucleoprotein</keyword>
<keyword id="KW-0689">Ribosomal protein</keyword>
<proteinExistence type="evidence at protein level"/>
<name>RL21A_SCHPO</name>
<organism>
    <name type="scientific">Schizosaccharomyces pombe (strain 972 / ATCC 24843)</name>
    <name type="common">Fission yeast</name>
    <dbReference type="NCBI Taxonomy" id="284812"/>
    <lineage>
        <taxon>Eukaryota</taxon>
        <taxon>Fungi</taxon>
        <taxon>Dikarya</taxon>
        <taxon>Ascomycota</taxon>
        <taxon>Taphrinomycotina</taxon>
        <taxon>Schizosaccharomycetes</taxon>
        <taxon>Schizosaccharomycetales</taxon>
        <taxon>Schizosaccharomycetaceae</taxon>
        <taxon>Schizosaccharomyces</taxon>
    </lineage>
</organism>
<protein>
    <recommendedName>
        <fullName evidence="4">Large ribosomal subunit protein eL21A</fullName>
    </recommendedName>
    <alternativeName>
        <fullName>60S ribosomal protein L21-A</fullName>
    </alternativeName>
</protein>
<dbReference type="EMBL" id="CU329671">
    <property type="protein sequence ID" value="CAB44755.1"/>
    <property type="molecule type" value="Genomic_DNA"/>
</dbReference>
<dbReference type="PIR" id="T40310">
    <property type="entry name" value="T40310"/>
</dbReference>
<dbReference type="RefSeq" id="NP_596032.1">
    <property type="nucleotide sequence ID" value="NM_001021942.2"/>
</dbReference>
<dbReference type="PDB" id="8ESQ">
    <property type="method" value="EM"/>
    <property type="resolution" value="2.80 A"/>
    <property type="chains" value="T=1-160"/>
</dbReference>
<dbReference type="PDB" id="8ESR">
    <property type="method" value="EM"/>
    <property type="resolution" value="3.20 A"/>
    <property type="chains" value="T=1-160"/>
</dbReference>
<dbReference type="PDB" id="8ETC">
    <property type="method" value="EM"/>
    <property type="resolution" value="3.10 A"/>
    <property type="chains" value="T=1-160"/>
</dbReference>
<dbReference type="PDB" id="8ETG">
    <property type="method" value="EM"/>
    <property type="resolution" value="3.40 A"/>
    <property type="chains" value="T=1-160"/>
</dbReference>
<dbReference type="PDB" id="8ETH">
    <property type="method" value="EM"/>
    <property type="resolution" value="3.80 A"/>
    <property type="chains" value="T=1-160"/>
</dbReference>
<dbReference type="PDB" id="8ETI">
    <property type="method" value="EM"/>
    <property type="resolution" value="3.70 A"/>
    <property type="chains" value="T=1-160"/>
</dbReference>
<dbReference type="PDB" id="8ETJ">
    <property type="method" value="EM"/>
    <property type="resolution" value="3.20 A"/>
    <property type="chains" value="T=1-160"/>
</dbReference>
<dbReference type="PDB" id="8EUG">
    <property type="method" value="EM"/>
    <property type="resolution" value="2.80 A"/>
    <property type="chains" value="T=1-160"/>
</dbReference>
<dbReference type="PDB" id="8EUI">
    <property type="method" value="EM"/>
    <property type="resolution" value="3.10 A"/>
    <property type="chains" value="T=1-160"/>
</dbReference>
<dbReference type="PDB" id="8EUP">
    <property type="method" value="EM"/>
    <property type="resolution" value="3.10 A"/>
    <property type="chains" value="T=1-160"/>
</dbReference>
<dbReference type="PDB" id="8EUY">
    <property type="method" value="EM"/>
    <property type="resolution" value="3.00 A"/>
    <property type="chains" value="T=1-160"/>
</dbReference>
<dbReference type="PDB" id="8EV3">
    <property type="method" value="EM"/>
    <property type="resolution" value="3.00 A"/>
    <property type="chains" value="T=137-155"/>
</dbReference>
<dbReference type="PDBsum" id="8ESQ"/>
<dbReference type="PDBsum" id="8ESR"/>
<dbReference type="PDBsum" id="8ETC"/>
<dbReference type="PDBsum" id="8ETG"/>
<dbReference type="PDBsum" id="8ETH"/>
<dbReference type="PDBsum" id="8ETI"/>
<dbReference type="PDBsum" id="8ETJ"/>
<dbReference type="PDBsum" id="8EUG"/>
<dbReference type="PDBsum" id="8EUI"/>
<dbReference type="PDBsum" id="8EUP"/>
<dbReference type="PDBsum" id="8EUY"/>
<dbReference type="PDBsum" id="8EV3"/>
<dbReference type="SMR" id="Q9UUC1"/>
<dbReference type="BioGRID" id="277466">
    <property type="interactions" value="7"/>
</dbReference>
<dbReference type="FunCoup" id="Q9UUC1">
    <property type="interactions" value="521"/>
</dbReference>
<dbReference type="STRING" id="284812.Q9UUC1"/>
<dbReference type="iPTMnet" id="Q9UUC1"/>
<dbReference type="PaxDb" id="4896-SPBC365.03c.1"/>
<dbReference type="EnsemblFungi" id="SPBC365.03c.1">
    <property type="protein sequence ID" value="SPBC365.03c.1:pep"/>
    <property type="gene ID" value="SPBC365.03c"/>
</dbReference>
<dbReference type="GeneID" id="2540950"/>
<dbReference type="KEGG" id="spo:2540950"/>
<dbReference type="PomBase" id="SPBC365.03c">
    <property type="gene designation" value="rpl2101"/>
</dbReference>
<dbReference type="VEuPathDB" id="FungiDB:SPBC365.03c"/>
<dbReference type="eggNOG" id="KOG1732">
    <property type="taxonomic scope" value="Eukaryota"/>
</dbReference>
<dbReference type="HOGENOM" id="CLU_103610_0_1_1"/>
<dbReference type="InParanoid" id="Q9UUC1"/>
<dbReference type="OMA" id="INYGDYV"/>
<dbReference type="PhylomeDB" id="Q9UUC1"/>
<dbReference type="Reactome" id="R-SPO-156827">
    <property type="pathway name" value="L13a-mediated translational silencing of Ceruloplasmin expression"/>
</dbReference>
<dbReference type="Reactome" id="R-SPO-1799339">
    <property type="pathway name" value="SRP-dependent cotranslational protein targeting to membrane"/>
</dbReference>
<dbReference type="Reactome" id="R-SPO-72689">
    <property type="pathway name" value="Formation of a pool of free 40S subunits"/>
</dbReference>
<dbReference type="Reactome" id="R-SPO-72706">
    <property type="pathway name" value="GTP hydrolysis and joining of the 60S ribosomal subunit"/>
</dbReference>
<dbReference type="Reactome" id="R-SPO-975956">
    <property type="pathway name" value="Nonsense Mediated Decay (NMD) independent of the Exon Junction Complex (EJC)"/>
</dbReference>
<dbReference type="Reactome" id="R-SPO-975957">
    <property type="pathway name" value="Nonsense Mediated Decay (NMD) enhanced by the Exon Junction Complex (EJC)"/>
</dbReference>
<dbReference type="PRO" id="PR:Q9UUC1"/>
<dbReference type="Proteomes" id="UP000002485">
    <property type="component" value="Chromosome II"/>
</dbReference>
<dbReference type="GO" id="GO:0005829">
    <property type="term" value="C:cytosol"/>
    <property type="evidence" value="ECO:0007005"/>
    <property type="project" value="PomBase"/>
</dbReference>
<dbReference type="GO" id="GO:0022625">
    <property type="term" value="C:cytosolic large ribosomal subunit"/>
    <property type="evidence" value="ECO:0000318"/>
    <property type="project" value="GO_Central"/>
</dbReference>
<dbReference type="GO" id="GO:0030684">
    <property type="term" value="C:preribosome"/>
    <property type="evidence" value="ECO:0000314"/>
    <property type="project" value="PomBase"/>
</dbReference>
<dbReference type="GO" id="GO:0003735">
    <property type="term" value="F:structural constituent of ribosome"/>
    <property type="evidence" value="ECO:0000318"/>
    <property type="project" value="GO_Central"/>
</dbReference>
<dbReference type="GO" id="GO:0002181">
    <property type="term" value="P:cytoplasmic translation"/>
    <property type="evidence" value="ECO:0000266"/>
    <property type="project" value="PomBase"/>
</dbReference>
<dbReference type="FunFam" id="2.30.30.70:FF:000001">
    <property type="entry name" value="60S ribosomal protein L21"/>
    <property type="match status" value="1"/>
</dbReference>
<dbReference type="FunFam" id="6.10.250.3260:FF:000001">
    <property type="entry name" value="60S ribosomal protein L21"/>
    <property type="match status" value="1"/>
</dbReference>
<dbReference type="Gene3D" id="6.10.250.3260">
    <property type="match status" value="1"/>
</dbReference>
<dbReference type="Gene3D" id="2.30.30.70">
    <property type="entry name" value="Ribosomal protein L21"/>
    <property type="match status" value="1"/>
</dbReference>
<dbReference type="InterPro" id="IPR001147">
    <property type="entry name" value="Ribosomal_eL21"/>
</dbReference>
<dbReference type="InterPro" id="IPR018259">
    <property type="entry name" value="Ribosomal_eL21_CS"/>
</dbReference>
<dbReference type="InterPro" id="IPR036948">
    <property type="entry name" value="Ribosomal_eL21_sf"/>
</dbReference>
<dbReference type="InterPro" id="IPR008991">
    <property type="entry name" value="Translation_prot_SH3-like_sf"/>
</dbReference>
<dbReference type="PANTHER" id="PTHR20981">
    <property type="entry name" value="60S RIBOSOMAL PROTEIN L21"/>
    <property type="match status" value="1"/>
</dbReference>
<dbReference type="Pfam" id="PF01157">
    <property type="entry name" value="Ribosomal_L21e"/>
    <property type="match status" value="1"/>
</dbReference>
<dbReference type="SUPFAM" id="SSF50104">
    <property type="entry name" value="Translation proteins SH3-like domain"/>
    <property type="match status" value="1"/>
</dbReference>
<dbReference type="PROSITE" id="PS01171">
    <property type="entry name" value="RIBOSOMAL_L21E"/>
    <property type="match status" value="1"/>
</dbReference>
<sequence length="160" mass="18380">MPHSYGIRARTRYTFQRGFREHGQIRLSTYLKTYKVGDIVDIKVNGAVQKGMPHKYYHGKTGVVYNVTQSSVGVLIYKVVGNRYMEKRVNVRIEHVKHSKCRQDFLDRVKANEAKRKEAKAQGKTVQLRRQPAPPAKAHFVSTENNEPVTLHPVAYDTTI</sequence>
<evidence type="ECO:0000250" key="1">
    <source>
        <dbReference type="UniProtKB" id="Q02753"/>
    </source>
</evidence>
<evidence type="ECO:0000256" key="2">
    <source>
        <dbReference type="SAM" id="MobiDB-lite"/>
    </source>
</evidence>
<evidence type="ECO:0000269" key="3">
    <source>
    </source>
</evidence>
<evidence type="ECO:0000305" key="4"/>
<evidence type="ECO:0007829" key="5">
    <source>
        <dbReference type="PDB" id="8ETC"/>
    </source>
</evidence>
<evidence type="ECO:0007829" key="6">
    <source>
        <dbReference type="PDB" id="8EUY"/>
    </source>
</evidence>
<gene>
    <name type="primary">rpl2101</name>
    <name type="synonym">rpl21</name>
    <name type="synonym">rpl21a</name>
    <name type="ORF">SPBC365.03c</name>
</gene>
<feature type="chain" id="PRO_0000149680" description="Large ribosomal subunit protein eL21A">
    <location>
        <begin position="1"/>
        <end position="160"/>
    </location>
</feature>
<feature type="region of interest" description="Disordered" evidence="2">
    <location>
        <begin position="114"/>
        <end position="138"/>
    </location>
</feature>
<feature type="strand" evidence="6">
    <location>
        <begin position="139"/>
        <end position="141"/>
    </location>
</feature>
<feature type="strand" evidence="5">
    <location>
        <begin position="144"/>
        <end position="146"/>
    </location>
</feature>